<protein>
    <recommendedName>
        <fullName evidence="1">Large ribosomal subunit protein bL28</fullName>
    </recommendedName>
    <alternativeName>
        <fullName evidence="2">50S ribosomal protein L28</fullName>
    </alternativeName>
</protein>
<proteinExistence type="inferred from homology"/>
<accession>B5YWD5</accession>
<gene>
    <name evidence="1" type="primary">rpmB</name>
    <name type="ordered locus">ECH74115_5007</name>
</gene>
<evidence type="ECO:0000255" key="1">
    <source>
        <dbReference type="HAMAP-Rule" id="MF_00373"/>
    </source>
</evidence>
<evidence type="ECO:0000305" key="2"/>
<name>RL28_ECO5E</name>
<feature type="chain" id="PRO_1000121626" description="Large ribosomal subunit protein bL28">
    <location>
        <begin position="1"/>
        <end position="78"/>
    </location>
</feature>
<sequence length="78" mass="9006">MSRVCQVTGKRPVTGNNRSHALNATKRRFLPNLHSHRFWVESEKRFVTLRVSAKGMRVIDKKGIDTVLAELRARGEKY</sequence>
<organism>
    <name type="scientific">Escherichia coli O157:H7 (strain EC4115 / EHEC)</name>
    <dbReference type="NCBI Taxonomy" id="444450"/>
    <lineage>
        <taxon>Bacteria</taxon>
        <taxon>Pseudomonadati</taxon>
        <taxon>Pseudomonadota</taxon>
        <taxon>Gammaproteobacteria</taxon>
        <taxon>Enterobacterales</taxon>
        <taxon>Enterobacteriaceae</taxon>
        <taxon>Escherichia</taxon>
    </lineage>
</organism>
<dbReference type="EMBL" id="CP001164">
    <property type="protein sequence ID" value="ACI36115.1"/>
    <property type="molecule type" value="Genomic_DNA"/>
</dbReference>
<dbReference type="RefSeq" id="WP_000091955.1">
    <property type="nucleotide sequence ID" value="NC_011353.1"/>
</dbReference>
<dbReference type="SMR" id="B5YWD5"/>
<dbReference type="GeneID" id="93778350"/>
<dbReference type="KEGG" id="ecf:ECH74115_5007"/>
<dbReference type="HOGENOM" id="CLU_064548_3_1_6"/>
<dbReference type="GO" id="GO:0022625">
    <property type="term" value="C:cytosolic large ribosomal subunit"/>
    <property type="evidence" value="ECO:0007669"/>
    <property type="project" value="TreeGrafter"/>
</dbReference>
<dbReference type="GO" id="GO:0003735">
    <property type="term" value="F:structural constituent of ribosome"/>
    <property type="evidence" value="ECO:0007669"/>
    <property type="project" value="InterPro"/>
</dbReference>
<dbReference type="GO" id="GO:0006412">
    <property type="term" value="P:translation"/>
    <property type="evidence" value="ECO:0007669"/>
    <property type="project" value="UniProtKB-UniRule"/>
</dbReference>
<dbReference type="FunFam" id="2.30.170.40:FF:000001">
    <property type="entry name" value="50S ribosomal protein L28"/>
    <property type="match status" value="1"/>
</dbReference>
<dbReference type="Gene3D" id="2.30.170.40">
    <property type="entry name" value="Ribosomal protein L28/L24"/>
    <property type="match status" value="1"/>
</dbReference>
<dbReference type="HAMAP" id="MF_00373">
    <property type="entry name" value="Ribosomal_bL28"/>
    <property type="match status" value="1"/>
</dbReference>
<dbReference type="InterPro" id="IPR026569">
    <property type="entry name" value="Ribosomal_bL28"/>
</dbReference>
<dbReference type="InterPro" id="IPR034704">
    <property type="entry name" value="Ribosomal_bL28/bL31-like_sf"/>
</dbReference>
<dbReference type="InterPro" id="IPR001383">
    <property type="entry name" value="Ribosomal_bL28_bact-type"/>
</dbReference>
<dbReference type="InterPro" id="IPR037147">
    <property type="entry name" value="Ribosomal_bL28_sf"/>
</dbReference>
<dbReference type="NCBIfam" id="TIGR00009">
    <property type="entry name" value="L28"/>
    <property type="match status" value="1"/>
</dbReference>
<dbReference type="PANTHER" id="PTHR13528">
    <property type="entry name" value="39S RIBOSOMAL PROTEIN L28, MITOCHONDRIAL"/>
    <property type="match status" value="1"/>
</dbReference>
<dbReference type="PANTHER" id="PTHR13528:SF2">
    <property type="entry name" value="LARGE RIBOSOMAL SUBUNIT PROTEIN BL28M"/>
    <property type="match status" value="1"/>
</dbReference>
<dbReference type="Pfam" id="PF00830">
    <property type="entry name" value="Ribosomal_L28"/>
    <property type="match status" value="1"/>
</dbReference>
<dbReference type="SUPFAM" id="SSF143800">
    <property type="entry name" value="L28p-like"/>
    <property type="match status" value="1"/>
</dbReference>
<comment type="similarity">
    <text evidence="1">Belongs to the bacterial ribosomal protein bL28 family.</text>
</comment>
<reference key="1">
    <citation type="journal article" date="2011" name="Proc. Natl. Acad. Sci. U.S.A.">
        <title>Genomic anatomy of Escherichia coli O157:H7 outbreaks.</title>
        <authorList>
            <person name="Eppinger M."/>
            <person name="Mammel M.K."/>
            <person name="Leclerc J.E."/>
            <person name="Ravel J."/>
            <person name="Cebula T.A."/>
        </authorList>
    </citation>
    <scope>NUCLEOTIDE SEQUENCE [LARGE SCALE GENOMIC DNA]</scope>
    <source>
        <strain>EC4115 / EHEC</strain>
    </source>
</reference>
<keyword id="KW-0687">Ribonucleoprotein</keyword>
<keyword id="KW-0689">Ribosomal protein</keyword>